<name>CAPSD_HBVA2</name>
<protein>
    <recommendedName>
        <fullName evidence="1">Capsid protein</fullName>
    </recommendedName>
    <alternativeName>
        <fullName evidence="1">Core antigen</fullName>
    </alternativeName>
    <alternativeName>
        <fullName evidence="1">Core protein</fullName>
    </alternativeName>
    <alternativeName>
        <fullName evidence="1">HBcAg</fullName>
    </alternativeName>
    <alternativeName>
        <fullName evidence="1">p21.5</fullName>
    </alternativeName>
</protein>
<accession>P03149</accession>
<feature type="chain" id="PRO_0000222314" description="Capsid protein">
    <location>
        <begin position="1"/>
        <end position="185"/>
    </location>
</feature>
<feature type="repeat" description="1; half-length">
    <location>
        <begin position="157"/>
        <end position="163"/>
    </location>
</feature>
<feature type="repeat" description="2">
    <location>
        <begin position="164"/>
        <end position="171"/>
    </location>
</feature>
<feature type="repeat" description="3">
    <location>
        <begin position="172"/>
        <end position="179"/>
    </location>
</feature>
<feature type="region of interest" description="Disordered" evidence="2">
    <location>
        <begin position="136"/>
        <end position="185"/>
    </location>
</feature>
<feature type="region of interest" description="3 X 8 AA repeats of S-P-R-R-R-[PR]-S-Q">
    <location>
        <begin position="157"/>
        <end position="179"/>
    </location>
</feature>
<feature type="region of interest" description="RNA binding" evidence="1">
    <location>
        <begin position="179"/>
        <end position="185"/>
    </location>
</feature>
<feature type="short sequence motif" description="Bipartite nuclear localization signal" evidence="1">
    <location>
        <begin position="160"/>
        <end position="177"/>
    </location>
</feature>
<feature type="compositionally biased region" description="Basic residues" evidence="2">
    <location>
        <begin position="149"/>
        <end position="178"/>
    </location>
</feature>
<feature type="modified residue" description="Phosphoserine; by host" evidence="1">
    <location>
        <position position="157"/>
    </location>
</feature>
<feature type="modified residue" description="Phosphoserine; by host" evidence="1">
    <location>
        <position position="164"/>
    </location>
</feature>
<feature type="modified residue" description="Phosphoserine; by host" evidence="1">
    <location>
        <position position="172"/>
    </location>
</feature>
<feature type="helix" evidence="3">
    <location>
        <begin position="7"/>
        <end position="9"/>
    </location>
</feature>
<feature type="helix" evidence="3">
    <location>
        <begin position="13"/>
        <end position="16"/>
    </location>
</feature>
<feature type="helix" evidence="3">
    <location>
        <begin position="27"/>
        <end position="37"/>
    </location>
</feature>
<feature type="turn" evidence="3">
    <location>
        <begin position="40"/>
        <end position="42"/>
    </location>
</feature>
<feature type="strand" evidence="3">
    <location>
        <begin position="43"/>
        <end position="46"/>
    </location>
</feature>
<feature type="helix" evidence="3">
    <location>
        <begin position="50"/>
        <end position="74"/>
    </location>
</feature>
<feature type="helix" evidence="3">
    <location>
        <begin position="79"/>
        <end position="91"/>
    </location>
</feature>
<feature type="helix" evidence="3">
    <location>
        <begin position="93"/>
        <end position="109"/>
    </location>
</feature>
<feature type="helix" evidence="3">
    <location>
        <begin position="112"/>
        <end position="127"/>
    </location>
</feature>
<feature type="helix" evidence="3">
    <location>
        <begin position="130"/>
        <end position="132"/>
    </location>
</feature>
<dbReference type="EMBL" id="V00866">
    <property type="status" value="NOT_ANNOTATED_CDS"/>
    <property type="molecule type" value="Genomic_DNA"/>
</dbReference>
<dbReference type="PDB" id="3J2V">
    <property type="method" value="EM"/>
    <property type="resolution" value="3.50 A"/>
    <property type="chains" value="A/B/C/D=1-185"/>
</dbReference>
<dbReference type="PDB" id="6UI6">
    <property type="method" value="EM"/>
    <property type="resolution" value="3.53 A"/>
    <property type="chains" value="A/B/C=1-143"/>
</dbReference>
<dbReference type="PDB" id="6UI7">
    <property type="method" value="EM"/>
    <property type="resolution" value="3.65 A"/>
    <property type="chains" value="A/B/C/D=1-143"/>
</dbReference>
<dbReference type="PDBsum" id="3J2V"/>
<dbReference type="PDBsum" id="6UI6"/>
<dbReference type="PDBsum" id="6UI7"/>
<dbReference type="SMR" id="P03149"/>
<dbReference type="EvolutionaryTrace" id="P03149"/>
<dbReference type="Proteomes" id="UP000007906">
    <property type="component" value="Genome"/>
</dbReference>
<dbReference type="GO" id="GO:0043657">
    <property type="term" value="C:host cell"/>
    <property type="evidence" value="ECO:0007669"/>
    <property type="project" value="GOC"/>
</dbReference>
<dbReference type="GO" id="GO:0030430">
    <property type="term" value="C:host cell cytoplasm"/>
    <property type="evidence" value="ECO:0007669"/>
    <property type="project" value="UniProtKB-SubCell"/>
</dbReference>
<dbReference type="GO" id="GO:0039619">
    <property type="term" value="C:T=4 icosahedral viral capsid"/>
    <property type="evidence" value="ECO:0007669"/>
    <property type="project" value="UniProtKB-UniRule"/>
</dbReference>
<dbReference type="GO" id="GO:0003677">
    <property type="term" value="F:DNA binding"/>
    <property type="evidence" value="ECO:0007669"/>
    <property type="project" value="UniProtKB-UniRule"/>
</dbReference>
<dbReference type="GO" id="GO:0003723">
    <property type="term" value="F:RNA binding"/>
    <property type="evidence" value="ECO:0007669"/>
    <property type="project" value="UniProtKB-UniRule"/>
</dbReference>
<dbReference type="GO" id="GO:0005198">
    <property type="term" value="F:structural molecule activity"/>
    <property type="evidence" value="ECO:0007669"/>
    <property type="project" value="UniProtKB-UniRule"/>
</dbReference>
<dbReference type="GO" id="GO:0075521">
    <property type="term" value="P:microtubule-dependent intracellular transport of viral material towards nucleus"/>
    <property type="evidence" value="ECO:0007669"/>
    <property type="project" value="UniProtKB-UniRule"/>
</dbReference>
<dbReference type="GO" id="GO:0046718">
    <property type="term" value="P:symbiont entry into host cell"/>
    <property type="evidence" value="ECO:0007669"/>
    <property type="project" value="UniProtKB-UniRule"/>
</dbReference>
<dbReference type="GO" id="GO:0075732">
    <property type="term" value="P:viral penetration into host nucleus"/>
    <property type="evidence" value="ECO:0007669"/>
    <property type="project" value="UniProtKB-UniRule"/>
</dbReference>
<dbReference type="FunFam" id="1.10.4090.10:FF:000001">
    <property type="entry name" value="Capsid protein"/>
    <property type="match status" value="1"/>
</dbReference>
<dbReference type="Gene3D" id="1.10.4090.10">
    <property type="entry name" value="Viral capsid, core domain supefamily, Hepatitis B virus"/>
    <property type="match status" value="1"/>
</dbReference>
<dbReference type="HAMAP" id="MF_04076">
    <property type="entry name" value="HBV_HBEAG"/>
    <property type="match status" value="1"/>
</dbReference>
<dbReference type="InterPro" id="IPR002006">
    <property type="entry name" value="Hepatitis_core"/>
</dbReference>
<dbReference type="InterPro" id="IPR036459">
    <property type="entry name" value="Viral_capsid_core_dom_sf_HBV"/>
</dbReference>
<dbReference type="Pfam" id="PF00906">
    <property type="entry name" value="Hepatitis_core"/>
    <property type="match status" value="2"/>
</dbReference>
<dbReference type="SUPFAM" id="SSF47852">
    <property type="entry name" value="Hepatitis B viral capsid (hbcag)"/>
    <property type="match status" value="1"/>
</dbReference>
<gene>
    <name evidence="1" type="primary">C</name>
</gene>
<organismHost>
    <name type="scientific">Homo sapiens</name>
    <name type="common">Human</name>
    <dbReference type="NCBI Taxonomy" id="9606"/>
</organismHost>
<organismHost>
    <name type="scientific">Pan troglodytes</name>
    <name type="common">Chimpanzee</name>
    <dbReference type="NCBI Taxonomy" id="9598"/>
</organismHost>
<evidence type="ECO:0000255" key="1">
    <source>
        <dbReference type="HAMAP-Rule" id="MF_04076"/>
    </source>
</evidence>
<evidence type="ECO:0000256" key="2">
    <source>
        <dbReference type="SAM" id="MobiDB-lite"/>
    </source>
</evidence>
<evidence type="ECO:0007829" key="3">
    <source>
        <dbReference type="PDB" id="3J2V"/>
    </source>
</evidence>
<reference key="1">
    <citation type="journal article" date="1983" name="Nucleic Acids Res.">
        <title>The complete nucleotide sequences of the cloned hepatitis B virus DNA; subtype adr and adw.</title>
        <authorList>
            <person name="Ono Y."/>
            <person name="Onda H."/>
            <person name="Sasada R."/>
            <person name="Igarashi K."/>
            <person name="Sugino Y."/>
            <person name="Nishioka K."/>
        </authorList>
    </citation>
    <scope>NUCLEOTIDE SEQUENCE [GENOMIC DNA]</scope>
</reference>
<keyword id="KW-0002">3D-structure</keyword>
<keyword id="KW-0024">Alternative initiation</keyword>
<keyword id="KW-0167">Capsid protein</keyword>
<keyword id="KW-1176">Cytoplasmic inwards viral transport</keyword>
<keyword id="KW-0238">DNA-binding</keyword>
<keyword id="KW-1035">Host cytoplasm</keyword>
<keyword id="KW-0945">Host-virus interaction</keyword>
<keyword id="KW-1177">Microtubular inwards viral transport</keyword>
<keyword id="KW-0597">Phosphoprotein</keyword>
<keyword id="KW-0677">Repeat</keyword>
<keyword id="KW-0694">RNA-binding</keyword>
<keyword id="KW-1144">T=4 icosahedral capsid protein</keyword>
<keyword id="KW-1163">Viral penetration into host nucleus</keyword>
<keyword id="KW-0946">Virion</keyword>
<keyword id="KW-1160">Virus entry into host cell</keyword>
<comment type="function">
    <text evidence="1">Self assembles to form an icosahedral capsid. Most capsids appear to be large particles with an icosahedral symmetry of T=4 and consist of 240 copies of capsid protein, though a fraction forms smaller T=3 particles consisting of 180 capsid proteins. Entering capsids are transported along microtubules to the nucleus. Phosphorylation of the capsid is thought to induce exposure of nuclear localization signal in the C-terminal portion of the capsid protein that allows binding to the nuclear pore complex via the importin (karyopherin-) alpha and beta. Capsids are imported in intact form through the nuclear pore into the nuclear basket, where it probably binds NUP153. Only capsids that contain the mature viral genome can release the viral DNA and capsid protein into the nucleoplasm. Immature capsids get stuck in the basket. Capsids encapsulate the pre-genomic RNA and the P protein. Pre-genomic RNA is reverse-transcribed into DNA while the capsid is still in the cytoplasm. The capsid can then either be directed to the nucleus, providing more genomes for transcription, or bud through the endoplasmic reticulum to provide new virions.</text>
</comment>
<comment type="subunit">
    <text evidence="1">Homodimerizes, then multimerizes. Interacts with cytosol exposed regions of viral L glycoprotein present in the reticulum-to-Golgi compartment. Interacts with human FLNB. Phosphorylated form interacts with host importin alpha; this interaction depends on the exposure of the NLS, which itself depends upon genome maturation and/or phosphorylation of the capsid protein. Interacts with host NUP153.</text>
</comment>
<comment type="subcellular location">
    <subcellularLocation>
        <location evidence="1">Virion</location>
    </subcellularLocation>
    <subcellularLocation>
        <location evidence="1">Host cytoplasm</location>
    </subcellularLocation>
</comment>
<comment type="alternative products">
    <event type="alternative initiation"/>
    <isoform>
        <id>P03149-1</id>
        <name>Capsid protein</name>
        <sequence type="displayed"/>
    </isoform>
    <isoform>
        <id>P0C692-1</id>
        <name>External core antigen</name>
        <sequence type="external"/>
    </isoform>
</comment>
<comment type="PTM">
    <text evidence="1">Phosphorylated by host SRPK1, SRPK2, and maybe protein kinase C or GAPDH. Phosphorylation is critical for pregenomic RNA packaging. Protein kinase C phosphorylation is stimulated by HBx protein and may play a role in transport of the viral genome to the nucleus at the late step during the viral replication cycle.</text>
</comment>
<comment type="similarity">
    <text evidence="1">Belongs to the orthohepadnavirus core antigen family.</text>
</comment>
<sequence>MDIDPYKEFGATVELLSFLPSDFFPSVRDLLDTASALYREALESPEHCSPHHTALRQAILCWGELMTLATWVGNNLQDPASRDLVVNYVNTNMGLKIRQLLWFHISCLTFGRETVLEYLVSFGVWIRTPPAYRPPNAPILSTLPETTVVRRRDRGRSPRRRTPSPRRRRSQSPRRRRSQSRESQC</sequence>
<organism>
    <name type="scientific">Hepatitis B virus genotype A2 subtype adw (isolate Japan/Nishioka/1983)</name>
    <name type="common">HBV-A</name>
    <dbReference type="NCBI Taxonomy" id="482134"/>
    <lineage>
        <taxon>Viruses</taxon>
        <taxon>Riboviria</taxon>
        <taxon>Pararnavirae</taxon>
        <taxon>Artverviricota</taxon>
        <taxon>Revtraviricetes</taxon>
        <taxon>Blubervirales</taxon>
        <taxon>Hepadnaviridae</taxon>
        <taxon>Orthohepadnavirus</taxon>
        <taxon>Hepatitis B virus</taxon>
    </lineage>
</organism>
<proteinExistence type="evidence at protein level"/>